<geneLocation type="plasmid">
    <name>pBLO1</name>
</geneLocation>
<comment type="similarity">
    <text evidence="1">Belongs to the initiator RepB protein family.</text>
</comment>
<protein>
    <recommendedName>
        <fullName>Probable replication protein rep</fullName>
    </recommendedName>
</protein>
<evidence type="ECO:0000305" key="1"/>
<feature type="chain" id="PRO_0000068310" description="Probable replication protein rep">
    <location>
        <begin position="1"/>
        <end position="297"/>
    </location>
</feature>
<accession>Q8GN33</accession>
<sequence length="297" mass="34068">MSNEIVKFSNQFNNVALKKFDAVHLDVLMAIASRVRERGTATVEFSFEELRGLMRLKQNLTNKQLADKIVQTNARLLALNYMFEDSGKIIQFALFTVFETDPANQTLEVSVNERFAFLLNDLTSQFTRFELAEFADLKSKYAKEFYRRAKQYRSSGIWKVSRDEFCRLLNVSKSTSDSVSNLNRVVLKPIVEECGPLLGLKIERQYAKRRLSGFVFTFARETPPVIDARPVKAKEEQDSGHWTSVAGYGEVFTTTELFDVTAARDHFDGTVDAGECRYCRYDARNRERHARNAGTLF</sequence>
<name>REP_BIFLO</name>
<keyword id="KW-0235">DNA replication</keyword>
<keyword id="KW-0614">Plasmid</keyword>
<keyword id="KW-1185">Reference proteome</keyword>
<gene>
    <name type="primary">rep</name>
    <name type="ordered locus">BL1821</name>
</gene>
<proteinExistence type="inferred from homology"/>
<reference key="1">
    <citation type="journal article" date="2002" name="Proc. Natl. Acad. Sci. U.S.A.">
        <title>The genome sequence of Bifidobacterium longum reflects its adaptation to the human gastrointestinal tract.</title>
        <authorList>
            <person name="Schell M.A."/>
            <person name="Karmirantzou M."/>
            <person name="Snel B."/>
            <person name="Vilanova D."/>
            <person name="Berger B."/>
            <person name="Pessi G."/>
            <person name="Zwahlen M.-C."/>
            <person name="Desiere F."/>
            <person name="Bork P."/>
            <person name="Delley M."/>
            <person name="Pridmore R.D."/>
            <person name="Arigoni F."/>
        </authorList>
    </citation>
    <scope>NUCLEOTIDE SEQUENCE [LARGE SCALE GENOMIC DNA]</scope>
    <source>
        <strain>NCC 2705</strain>
    </source>
</reference>
<organism>
    <name type="scientific">Bifidobacterium longum (strain NCC 2705)</name>
    <dbReference type="NCBI Taxonomy" id="206672"/>
    <lineage>
        <taxon>Bacteria</taxon>
        <taxon>Bacillati</taxon>
        <taxon>Actinomycetota</taxon>
        <taxon>Actinomycetes</taxon>
        <taxon>Bifidobacteriales</taxon>
        <taxon>Bifidobacteriaceae</taxon>
        <taxon>Bifidobacterium</taxon>
    </lineage>
</organism>
<dbReference type="EMBL" id="AF540971">
    <property type="protein sequence ID" value="AAN31777.1"/>
    <property type="molecule type" value="Genomic_DNA"/>
</dbReference>
<dbReference type="RefSeq" id="NP_862282.1">
    <property type="nucleotide sequence ID" value="NC_004943.1"/>
</dbReference>
<dbReference type="RefSeq" id="WP_011117009.1">
    <property type="nucleotide sequence ID" value="NC_004943.1"/>
</dbReference>
<dbReference type="SMR" id="Q8GN33"/>
<dbReference type="EnsemblBacteria" id="AAN31777">
    <property type="protein sequence ID" value="AAN31777"/>
    <property type="gene ID" value="AAN31777"/>
</dbReference>
<dbReference type="KEGG" id="blo:rep"/>
<dbReference type="PATRIC" id="fig|206672.9.peg.1868"/>
<dbReference type="HOGENOM" id="CLU_059708_0_1_11"/>
<dbReference type="OrthoDB" id="3230627at2"/>
<dbReference type="Proteomes" id="UP000000439">
    <property type="component" value="Plasmid pBLO1"/>
</dbReference>
<dbReference type="GO" id="GO:0003887">
    <property type="term" value="F:DNA-directed DNA polymerase activity"/>
    <property type="evidence" value="ECO:0007669"/>
    <property type="project" value="InterPro"/>
</dbReference>
<dbReference type="GO" id="GO:0006270">
    <property type="term" value="P:DNA replication initiation"/>
    <property type="evidence" value="ECO:0007669"/>
    <property type="project" value="InterPro"/>
</dbReference>
<dbReference type="Gene3D" id="1.10.10.10">
    <property type="entry name" value="Winged helix-like DNA-binding domain superfamily/Winged helix DNA-binding domain"/>
    <property type="match status" value="2"/>
</dbReference>
<dbReference type="InterPro" id="IPR000525">
    <property type="entry name" value="Initiator_Rep_WH1"/>
</dbReference>
<dbReference type="InterPro" id="IPR036388">
    <property type="entry name" value="WH-like_DNA-bd_sf"/>
</dbReference>
<dbReference type="InterPro" id="IPR036390">
    <property type="entry name" value="WH_DNA-bd_sf"/>
</dbReference>
<dbReference type="Pfam" id="PF21205">
    <property type="entry name" value="Rep3_C"/>
    <property type="match status" value="1"/>
</dbReference>
<dbReference type="Pfam" id="PF01051">
    <property type="entry name" value="Rep3_N"/>
    <property type="match status" value="1"/>
</dbReference>
<dbReference type="SUPFAM" id="SSF46785">
    <property type="entry name" value="Winged helix' DNA-binding domain"/>
    <property type="match status" value="2"/>
</dbReference>